<reference key="1">
    <citation type="submission" date="2007-07" db="EMBL/GenBank/DDBJ databases">
        <title>Complete genome sequence of Campylobacter jejuni subsp doylei 269.97 isolated from human blood.</title>
        <authorList>
            <person name="Fouts D.E."/>
            <person name="Mongodin E.F."/>
            <person name="Puiu D."/>
            <person name="Sebastian Y."/>
            <person name="Miller W.G."/>
            <person name="Mandrell R.E."/>
            <person name="Lastovica A.J."/>
            <person name="Nelson K.E."/>
        </authorList>
    </citation>
    <scope>NUCLEOTIDE SEQUENCE [LARGE SCALE GENOMIC DNA]</scope>
    <source>
        <strain>ATCC BAA-1458 / RM4099 / 269.97</strain>
    </source>
</reference>
<sequence>MSKEKEVLLNEEIRADEIRCVGDDGKVYGIISSDEALEIANRLGLDLVMIAADAKPPVCKIMDYGKFRYQQEKKQKEAKKKQKVIDIKEIKLSVKIAQNDINYKVKHALEFLEQGKHVRFRVFLKGREMATPEAGVVLLEKIWTMIENEANRDKEPNFEGRYVNMLVTPKKA</sequence>
<protein>
    <recommendedName>
        <fullName evidence="1">Translation initiation factor IF-3</fullName>
    </recommendedName>
</protein>
<feature type="chain" id="PRO_1000004534" description="Translation initiation factor IF-3">
    <location>
        <begin position="1"/>
        <end position="172"/>
    </location>
</feature>
<organism>
    <name type="scientific">Campylobacter jejuni subsp. doylei (strain ATCC BAA-1458 / RM4099 / 269.97)</name>
    <dbReference type="NCBI Taxonomy" id="360109"/>
    <lineage>
        <taxon>Bacteria</taxon>
        <taxon>Pseudomonadati</taxon>
        <taxon>Campylobacterota</taxon>
        <taxon>Epsilonproteobacteria</taxon>
        <taxon>Campylobacterales</taxon>
        <taxon>Campylobacteraceae</taxon>
        <taxon>Campylobacter</taxon>
    </lineage>
</organism>
<gene>
    <name evidence="1" type="primary">infC</name>
    <name type="ordered locus">JJD26997_0217</name>
</gene>
<evidence type="ECO:0000255" key="1">
    <source>
        <dbReference type="HAMAP-Rule" id="MF_00080"/>
    </source>
</evidence>
<dbReference type="EMBL" id="CP000768">
    <property type="protein sequence ID" value="ABS43673.1"/>
    <property type="molecule type" value="Genomic_DNA"/>
</dbReference>
<dbReference type="SMR" id="A7H1S1"/>
<dbReference type="KEGG" id="cjd:JJD26997_0217"/>
<dbReference type="HOGENOM" id="CLU_054919_3_2_7"/>
<dbReference type="Proteomes" id="UP000002302">
    <property type="component" value="Chromosome"/>
</dbReference>
<dbReference type="GO" id="GO:0005829">
    <property type="term" value="C:cytosol"/>
    <property type="evidence" value="ECO:0007669"/>
    <property type="project" value="TreeGrafter"/>
</dbReference>
<dbReference type="GO" id="GO:0016020">
    <property type="term" value="C:membrane"/>
    <property type="evidence" value="ECO:0007669"/>
    <property type="project" value="TreeGrafter"/>
</dbReference>
<dbReference type="GO" id="GO:0043022">
    <property type="term" value="F:ribosome binding"/>
    <property type="evidence" value="ECO:0007669"/>
    <property type="project" value="TreeGrafter"/>
</dbReference>
<dbReference type="GO" id="GO:0003743">
    <property type="term" value="F:translation initiation factor activity"/>
    <property type="evidence" value="ECO:0007669"/>
    <property type="project" value="UniProtKB-UniRule"/>
</dbReference>
<dbReference type="GO" id="GO:0032790">
    <property type="term" value="P:ribosome disassembly"/>
    <property type="evidence" value="ECO:0007669"/>
    <property type="project" value="TreeGrafter"/>
</dbReference>
<dbReference type="FunFam" id="3.10.20.80:FF:000001">
    <property type="entry name" value="Translation initiation factor IF-3"/>
    <property type="match status" value="1"/>
</dbReference>
<dbReference type="Gene3D" id="3.30.110.10">
    <property type="entry name" value="Translation initiation factor 3 (IF-3), C-terminal domain"/>
    <property type="match status" value="1"/>
</dbReference>
<dbReference type="Gene3D" id="3.10.20.80">
    <property type="entry name" value="Translation initiation factor 3 (IF-3), N-terminal domain"/>
    <property type="match status" value="1"/>
</dbReference>
<dbReference type="HAMAP" id="MF_00080">
    <property type="entry name" value="IF_3"/>
    <property type="match status" value="1"/>
</dbReference>
<dbReference type="InterPro" id="IPR036788">
    <property type="entry name" value="T_IF-3_C_sf"/>
</dbReference>
<dbReference type="InterPro" id="IPR036787">
    <property type="entry name" value="T_IF-3_N_sf"/>
</dbReference>
<dbReference type="InterPro" id="IPR019813">
    <property type="entry name" value="Translation_initiation_fac3_CS"/>
</dbReference>
<dbReference type="InterPro" id="IPR001288">
    <property type="entry name" value="Translation_initiation_fac_3"/>
</dbReference>
<dbReference type="InterPro" id="IPR019815">
    <property type="entry name" value="Translation_initiation_fac_3_C"/>
</dbReference>
<dbReference type="InterPro" id="IPR019814">
    <property type="entry name" value="Translation_initiation_fac_3_N"/>
</dbReference>
<dbReference type="NCBIfam" id="TIGR00168">
    <property type="entry name" value="infC"/>
    <property type="match status" value="1"/>
</dbReference>
<dbReference type="PANTHER" id="PTHR10938">
    <property type="entry name" value="TRANSLATION INITIATION FACTOR IF-3"/>
    <property type="match status" value="1"/>
</dbReference>
<dbReference type="PANTHER" id="PTHR10938:SF0">
    <property type="entry name" value="TRANSLATION INITIATION FACTOR IF-3, MITOCHONDRIAL"/>
    <property type="match status" value="1"/>
</dbReference>
<dbReference type="Pfam" id="PF00707">
    <property type="entry name" value="IF3_C"/>
    <property type="match status" value="1"/>
</dbReference>
<dbReference type="Pfam" id="PF05198">
    <property type="entry name" value="IF3_N"/>
    <property type="match status" value="1"/>
</dbReference>
<dbReference type="SUPFAM" id="SSF55200">
    <property type="entry name" value="Translation initiation factor IF3, C-terminal domain"/>
    <property type="match status" value="1"/>
</dbReference>
<dbReference type="SUPFAM" id="SSF54364">
    <property type="entry name" value="Translation initiation factor IF3, N-terminal domain"/>
    <property type="match status" value="1"/>
</dbReference>
<dbReference type="PROSITE" id="PS00938">
    <property type="entry name" value="IF3"/>
    <property type="match status" value="1"/>
</dbReference>
<keyword id="KW-0963">Cytoplasm</keyword>
<keyword id="KW-0396">Initiation factor</keyword>
<keyword id="KW-0648">Protein biosynthesis</keyword>
<proteinExistence type="inferred from homology"/>
<name>IF3_CAMJD</name>
<comment type="function">
    <text evidence="1">IF-3 binds to the 30S ribosomal subunit and shifts the equilibrium between 70S ribosomes and their 50S and 30S subunits in favor of the free subunits, thus enhancing the availability of 30S subunits on which protein synthesis initiation begins.</text>
</comment>
<comment type="subunit">
    <text evidence="1">Monomer.</text>
</comment>
<comment type="subcellular location">
    <subcellularLocation>
        <location evidence="1">Cytoplasm</location>
    </subcellularLocation>
</comment>
<comment type="similarity">
    <text evidence="1">Belongs to the IF-3 family.</text>
</comment>
<accession>A7H1S1</accession>